<protein>
    <recommendedName>
        <fullName evidence="2">K(+)-insensitive pyrophosphate-energized proton pump 2</fullName>
        <ecNumber evidence="2">7.1.3.1</ecNumber>
    </recommendedName>
    <alternativeName>
        <fullName evidence="2">Membrane-bound proton-translocating pyrophosphatase 2</fullName>
    </alternativeName>
    <alternativeName>
        <fullName evidence="2">Pyrophosphate-energized inorganic pyrophosphatase 2</fullName>
        <shortName evidence="2">H(+)-PPase 2</shortName>
    </alternativeName>
</protein>
<comment type="function">
    <text evidence="2">Proton pump that utilizes the energy of pyrophosphate hydrolysis as the driving force for proton movement across the membrane. Generates a proton motive force.</text>
</comment>
<comment type="catalytic activity">
    <reaction evidence="2">
        <text>diphosphate + H2O + H(+)(in) = 2 phosphate + 2 H(+)(out)</text>
        <dbReference type="Rhea" id="RHEA:13973"/>
        <dbReference type="ChEBI" id="CHEBI:15377"/>
        <dbReference type="ChEBI" id="CHEBI:15378"/>
        <dbReference type="ChEBI" id="CHEBI:33019"/>
        <dbReference type="ChEBI" id="CHEBI:43474"/>
        <dbReference type="EC" id="7.1.3.1"/>
    </reaction>
</comment>
<comment type="cofactor">
    <cofactor evidence="2">
        <name>Mg(2+)</name>
        <dbReference type="ChEBI" id="CHEBI:18420"/>
    </cofactor>
</comment>
<comment type="subunit">
    <text evidence="2">Homodimer.</text>
</comment>
<comment type="subcellular location">
    <subcellularLocation>
        <location evidence="2">Cell membrane</location>
        <topology evidence="2">Multi-pass membrane protein</topology>
    </subcellularLocation>
</comment>
<comment type="similarity">
    <text evidence="2">Belongs to the H(+)-translocating pyrophosphatase (TC 3.A.10) family. K(+)-insensitive subfamily.</text>
</comment>
<organism>
    <name type="scientific">Moorella thermoacetica (strain ATCC 39073 / JCM 9320)</name>
    <dbReference type="NCBI Taxonomy" id="264732"/>
    <lineage>
        <taxon>Bacteria</taxon>
        <taxon>Bacillati</taxon>
        <taxon>Bacillota</taxon>
        <taxon>Clostridia</taxon>
        <taxon>Moorellales</taxon>
        <taxon>Moorellaceae</taxon>
        <taxon>Moorella</taxon>
    </lineage>
</organism>
<feature type="chain" id="PRO_0000401183" description="K(+)-insensitive pyrophosphate-energized proton pump 2">
    <location>
        <begin position="1"/>
        <end position="682"/>
    </location>
</feature>
<feature type="transmembrane region" description="Helical" evidence="2">
    <location>
        <begin position="1"/>
        <end position="21"/>
    </location>
</feature>
<feature type="transmembrane region" description="Helical" evidence="2">
    <location>
        <begin position="56"/>
        <end position="76"/>
    </location>
</feature>
<feature type="transmembrane region" description="Helical" evidence="2">
    <location>
        <begin position="78"/>
        <end position="98"/>
    </location>
</feature>
<feature type="transmembrane region" description="Helical" evidence="2">
    <location>
        <begin position="130"/>
        <end position="150"/>
    </location>
</feature>
<feature type="transmembrane region" description="Helical" evidence="2">
    <location>
        <begin position="160"/>
        <end position="180"/>
    </location>
</feature>
<feature type="transmembrane region" description="Helical" evidence="2">
    <location>
        <begin position="237"/>
        <end position="257"/>
    </location>
</feature>
<feature type="transmembrane region" description="Helical" evidence="2">
    <location>
        <begin position="258"/>
        <end position="278"/>
    </location>
</feature>
<feature type="transmembrane region" description="Helical" evidence="2">
    <location>
        <begin position="291"/>
        <end position="311"/>
    </location>
</feature>
<feature type="transmembrane region" description="Helical" evidence="2">
    <location>
        <begin position="318"/>
        <end position="338"/>
    </location>
</feature>
<feature type="transmembrane region" description="Helical" evidence="2">
    <location>
        <begin position="353"/>
        <end position="373"/>
    </location>
</feature>
<feature type="transmembrane region" description="Helical" evidence="2">
    <location>
        <begin position="375"/>
        <end position="395"/>
    </location>
</feature>
<feature type="transmembrane region" description="Helical" evidence="2">
    <location>
        <begin position="404"/>
        <end position="424"/>
    </location>
</feature>
<feature type="transmembrane region" description="Helical" evidence="2">
    <location>
        <begin position="468"/>
        <end position="488"/>
    </location>
</feature>
<feature type="transmembrane region" description="Helical" evidence="2">
    <location>
        <begin position="506"/>
        <end position="526"/>
    </location>
</feature>
<feature type="transmembrane region" description="Helical" evidence="2">
    <location>
        <begin position="574"/>
        <end position="594"/>
    </location>
</feature>
<feature type="transmembrane region" description="Helical" evidence="2">
    <location>
        <begin position="595"/>
        <end position="615"/>
    </location>
</feature>
<feature type="transmembrane region" description="Helical" evidence="2">
    <location>
        <begin position="662"/>
        <end position="682"/>
    </location>
</feature>
<feature type="binding site" evidence="1">
    <location>
        <position position="183"/>
    </location>
    <ligand>
        <name>substrate</name>
    </ligand>
</feature>
<feature type="binding site" evidence="1">
    <location>
        <position position="186"/>
    </location>
    <ligand>
        <name>Mg(2+)</name>
        <dbReference type="ChEBI" id="CHEBI:18420"/>
        <label>1</label>
    </ligand>
</feature>
<feature type="binding site" evidence="1">
    <location>
        <position position="190"/>
    </location>
    <ligand>
        <name>Mg(2+)</name>
        <dbReference type="ChEBI" id="CHEBI:18420"/>
        <label>1</label>
    </ligand>
</feature>
<feature type="binding site" evidence="1">
    <location>
        <position position="216"/>
    </location>
    <ligand>
        <name>Mg(2+)</name>
        <dbReference type="ChEBI" id="CHEBI:18420"/>
        <label>2</label>
    </ligand>
</feature>
<feature type="binding site" evidence="1">
    <location>
        <position position="432"/>
    </location>
    <ligand>
        <name>Mg(2+)</name>
        <dbReference type="ChEBI" id="CHEBI:18420"/>
        <label>2</label>
    </ligand>
</feature>
<feature type="binding site" evidence="1">
    <location>
        <position position="623"/>
    </location>
    <ligand>
        <name>Ca(2+)</name>
        <dbReference type="ChEBI" id="CHEBI:29108"/>
    </ligand>
</feature>
<feature type="binding site" evidence="1">
    <location>
        <position position="649"/>
    </location>
    <ligand>
        <name>Ca(2+)</name>
        <dbReference type="ChEBI" id="CHEBI:29108"/>
    </ligand>
</feature>
<feature type="binding site" evidence="1">
    <location>
        <position position="653"/>
    </location>
    <ligand>
        <name>Ca(2+)</name>
        <dbReference type="ChEBI" id="CHEBI:29108"/>
    </ligand>
</feature>
<feature type="binding site" evidence="1">
    <location>
        <position position="656"/>
    </location>
    <ligand>
        <name>substrate</name>
    </ligand>
</feature>
<feature type="site" description="Important for ion transport" evidence="1">
    <location>
        <position position="220"/>
    </location>
</feature>
<feature type="site" description="Important for ion transport" evidence="1">
    <location>
        <position position="227"/>
    </location>
</feature>
<feature type="site" description="Determinant of potassium independence" evidence="2">
    <location>
        <position position="462"/>
    </location>
</feature>
<feature type="site" description="Important for ion transport" evidence="1">
    <location>
        <position position="657"/>
    </location>
</feature>
<feature type="site" description="Important for ion transport" evidence="1">
    <location>
        <position position="668"/>
    </location>
</feature>
<reference key="1">
    <citation type="journal article" date="2008" name="Environ. Microbiol.">
        <title>The complete genome sequence of Moorella thermoacetica (f. Clostridium thermoaceticum).</title>
        <authorList>
            <person name="Pierce E."/>
            <person name="Xie G."/>
            <person name="Barabote R.D."/>
            <person name="Saunders E."/>
            <person name="Han C.S."/>
            <person name="Detter J.C."/>
            <person name="Richardson P."/>
            <person name="Brettin T.S."/>
            <person name="Das A."/>
            <person name="Ljungdahl L.G."/>
            <person name="Ragsdale S.W."/>
        </authorList>
    </citation>
    <scope>NUCLEOTIDE SEQUENCE [LARGE SCALE GENOMIC DNA]</scope>
    <source>
        <strain>ATCC 39073 / JCM 9320</strain>
    </source>
</reference>
<sequence length="682" mass="70892">MELFPIIPAGGILALLVALYMTSSVLKEDTGPKEMQTIAAAIREGAMAFLNRQYRTIAGLALIVAVLLALLTRQYHTAVAFITGAFASALSGYIGMYVAVNANLRVAAGARNSLNKALTVAFRGGAVTGLAVTALSLLGVTSLFYAFGGATNPTRAPLDIVGFGFGASFVALFAQLSGGIYTKAADVGADLVGKVEAGIPEDDPRNPAVIADLVGDNVGDCAGRGADLFESTAAENIGAMILGIALVPFFGVKGIVFPLVARAAGIIASIIGMFFVRAEENQDPMAALNRGYIVTSILAIIFLYPISRYMLSGPGVNFIYFYGAGIIGIVLSFIFVLITQYYTSYDYRPVKEIARASITGPATNIISGVAVGFESTALPVVFISLAILGAYWLGLKSGLPGGGLYGTAVATMGMLSTAAYILAMDTYGPITDNAGGIVEMSGAPEEVRRRTDRLDASGNTTKALTKGYAIGSAALATFLLFSAYIDEVKIALNIKGNFPVDIGKPEVFVGAFIAAMMVLLFSSTAIRAVGNAAQYVILEVRRQFKEIPGIMEGTAKPEYGACVDIVTRGALKEMVLPGLIVVITPIIVGLVLKAEAAAAFLMVGTITGVIVALFLNNGGGAWDNAKKYIELGNFGGKGSEAHKAGVVGDTVGDPFKDTAGPSLHVLVKLISTITLVLAGLFI</sequence>
<accession>Q2RLE0</accession>
<dbReference type="EC" id="7.1.3.1" evidence="2"/>
<dbReference type="EMBL" id="CP000232">
    <property type="protein sequence ID" value="ABC18749.1"/>
    <property type="molecule type" value="Genomic_DNA"/>
</dbReference>
<dbReference type="RefSeq" id="YP_429292.1">
    <property type="nucleotide sequence ID" value="NC_007644.1"/>
</dbReference>
<dbReference type="SMR" id="Q2RLE0"/>
<dbReference type="STRING" id="264732.Moth_0418"/>
<dbReference type="EnsemblBacteria" id="ABC18749">
    <property type="protein sequence ID" value="ABC18749"/>
    <property type="gene ID" value="Moth_0418"/>
</dbReference>
<dbReference type="KEGG" id="mta:Moth_0418"/>
<dbReference type="PATRIC" id="fig|264732.11.peg.452"/>
<dbReference type="eggNOG" id="COG3808">
    <property type="taxonomic scope" value="Bacteria"/>
</dbReference>
<dbReference type="HOGENOM" id="CLU_008743_3_1_9"/>
<dbReference type="OrthoDB" id="9808652at2"/>
<dbReference type="GO" id="GO:0005886">
    <property type="term" value="C:plasma membrane"/>
    <property type="evidence" value="ECO:0007669"/>
    <property type="project" value="UniProtKB-SubCell"/>
</dbReference>
<dbReference type="GO" id="GO:0009678">
    <property type="term" value="F:diphosphate hydrolysis-driven proton transmembrane transporter activity"/>
    <property type="evidence" value="ECO:0007669"/>
    <property type="project" value="UniProtKB-UniRule"/>
</dbReference>
<dbReference type="GO" id="GO:0004427">
    <property type="term" value="F:inorganic diphosphate phosphatase activity"/>
    <property type="evidence" value="ECO:0007669"/>
    <property type="project" value="UniProtKB-UniRule"/>
</dbReference>
<dbReference type="GO" id="GO:0000287">
    <property type="term" value="F:magnesium ion binding"/>
    <property type="evidence" value="ECO:0007669"/>
    <property type="project" value="UniProtKB-UniRule"/>
</dbReference>
<dbReference type="HAMAP" id="MF_01129">
    <property type="entry name" value="PPase_energized_pump"/>
    <property type="match status" value="1"/>
</dbReference>
<dbReference type="InterPro" id="IPR004131">
    <property type="entry name" value="PPase-energised_H-pump"/>
</dbReference>
<dbReference type="NCBIfam" id="NF001953">
    <property type="entry name" value="PRK00733.2-1"/>
    <property type="match status" value="1"/>
</dbReference>
<dbReference type="NCBIfam" id="NF001960">
    <property type="entry name" value="PRK00733.3-5"/>
    <property type="match status" value="1"/>
</dbReference>
<dbReference type="NCBIfam" id="TIGR01104">
    <property type="entry name" value="V_PPase"/>
    <property type="match status" value="1"/>
</dbReference>
<dbReference type="PANTHER" id="PTHR31998">
    <property type="entry name" value="K(+)-INSENSITIVE PYROPHOSPHATE-ENERGIZED PROTON PUMP"/>
    <property type="match status" value="1"/>
</dbReference>
<dbReference type="Pfam" id="PF03030">
    <property type="entry name" value="H_PPase"/>
    <property type="match status" value="1"/>
</dbReference>
<dbReference type="PIRSF" id="PIRSF001265">
    <property type="entry name" value="H+-PPase"/>
    <property type="match status" value="1"/>
</dbReference>
<evidence type="ECO:0000250" key="1"/>
<evidence type="ECO:0000255" key="2">
    <source>
        <dbReference type="HAMAP-Rule" id="MF_01129"/>
    </source>
</evidence>
<name>HPPA2_MOOTA</name>
<gene>
    <name evidence="2" type="primary">hppA2</name>
    <name type="ordered locus">Moth_0418</name>
</gene>
<proteinExistence type="inferred from homology"/>
<keyword id="KW-0106">Calcium</keyword>
<keyword id="KW-1003">Cell membrane</keyword>
<keyword id="KW-0375">Hydrogen ion transport</keyword>
<keyword id="KW-0406">Ion transport</keyword>
<keyword id="KW-0460">Magnesium</keyword>
<keyword id="KW-0472">Membrane</keyword>
<keyword id="KW-0479">Metal-binding</keyword>
<keyword id="KW-1278">Translocase</keyword>
<keyword id="KW-0812">Transmembrane</keyword>
<keyword id="KW-1133">Transmembrane helix</keyword>
<keyword id="KW-0813">Transport</keyword>